<sequence>MGKKKTRGEGSGLGRALIKERLNAGRGYRRNDTWLHTSELNDGYDWGRLNLQSVTEQSSLDDFLATAELAGTEFVAEKLNIKFVPAEARAGLLSSEESRRLKKLHEENKQLLRIPRRPPWDESTSPEVLQQTEKDSFLTWRRDLARLEEEQKLILTPFERNLDFWRQLWRVIERSDVVVQIVDARNPLLFRCPDLEKYVKEVSVHKVNMLLLNKADLLTREQRRAWARYFQKEGIRAVFWSALAEAQRLEAEERGEDAMDQEDQSDTEEETASKNATDHHEENSSSPNEEKDENEQDEEEEGEDERICVDESEWQTCSEESGDEDHAEENPESTATSSFYNSSRLLRKNELLEMFKSVHSGPTCKDGQITVGLVGYPNVGKSSTINTIFRNKKVSVSATPGHTKHFQTLFVEPGLCLCDCPGLVMPSFVSTKAEMICSGILPIDQMRDHVPAISLVCQNIPRNVLEGTYGINIIRPREDEDPDRPPTYEELLMAYGYMRGFMTAHGQPDQSRSARYVLKDYVSGKLLYCHPPPHINPEDFQPQHAKFAMRITGAEQIDGSGGKPSKVKRIENTVDKQFFHQANVRALTKGVQMVMGYKPGSGPVEAGKANTEQQAGKPWKKHGNRNKKEKVRRLNKHLDA</sequence>
<keyword id="KW-0963">Cytoplasm</keyword>
<keyword id="KW-0256">Endoplasmic reticulum</keyword>
<keyword id="KW-0342">GTP-binding</keyword>
<keyword id="KW-0378">Hydrolase</keyword>
<keyword id="KW-0547">Nucleotide-binding</keyword>
<keyword id="KW-0539">Nucleus</keyword>
<keyword id="KW-0653">Protein transport</keyword>
<keyword id="KW-1185">Reference proteome</keyword>
<keyword id="KW-0813">Transport</keyword>
<comment type="function">
    <text evidence="2">Functions as a GTPase. May act by mediating the release of NMD3 from the 60S ribosomal subunit after export into the cytoplasm during the 60S ribosomal subunit maturation.</text>
</comment>
<comment type="catalytic activity">
    <reaction evidence="2">
        <text>GTP + H2O = GDP + phosphate + H(+)</text>
        <dbReference type="Rhea" id="RHEA:19669"/>
        <dbReference type="ChEBI" id="CHEBI:15377"/>
        <dbReference type="ChEBI" id="CHEBI:15378"/>
        <dbReference type="ChEBI" id="CHEBI:37565"/>
        <dbReference type="ChEBI" id="CHEBI:43474"/>
        <dbReference type="ChEBI" id="CHEBI:58189"/>
    </reaction>
</comment>
<comment type="subcellular location">
    <subcellularLocation>
        <location evidence="2">Cytoplasm</location>
    </subcellularLocation>
    <subcellularLocation>
        <location evidence="2">Endoplasmic reticulum</location>
    </subcellularLocation>
    <subcellularLocation>
        <location evidence="2">Nucleus</location>
        <location evidence="2">Cajal body</location>
    </subcellularLocation>
    <text evidence="2">between the cytosol and Cajal bodies via a XPO1/CRM1-dependent export mechanism.</text>
</comment>
<comment type="domain">
    <text evidence="2">In contrast to other GTP-binding proteins, this family is characterized by a circular permutation of the GTPase motifs described by a G4-G1-G3 pattern.</text>
</comment>
<comment type="similarity">
    <text evidence="4">Belongs to the TRAFAC class YlqF/YawG GTPase family. LSG1 subfamily.</text>
</comment>
<protein>
    <recommendedName>
        <fullName evidence="1">Large subunit GTPase 1 homolog</fullName>
        <ecNumber evidence="2">3.6.5.-</ecNumber>
    </recommendedName>
</protein>
<organism>
    <name type="scientific">Danio rerio</name>
    <name type="common">Zebrafish</name>
    <name type="synonym">Brachydanio rerio</name>
    <dbReference type="NCBI Taxonomy" id="7955"/>
    <lineage>
        <taxon>Eukaryota</taxon>
        <taxon>Metazoa</taxon>
        <taxon>Chordata</taxon>
        <taxon>Craniata</taxon>
        <taxon>Vertebrata</taxon>
        <taxon>Euteleostomi</taxon>
        <taxon>Actinopterygii</taxon>
        <taxon>Neopterygii</taxon>
        <taxon>Teleostei</taxon>
        <taxon>Ostariophysi</taxon>
        <taxon>Cypriniformes</taxon>
        <taxon>Danionidae</taxon>
        <taxon>Danioninae</taxon>
        <taxon>Danio</taxon>
    </lineage>
</organism>
<proteinExistence type="evidence at transcript level"/>
<evidence type="ECO:0000250" key="1">
    <source>
        <dbReference type="UniProtKB" id="P53145"/>
    </source>
</evidence>
<evidence type="ECO:0000250" key="2">
    <source>
        <dbReference type="UniProtKB" id="Q9H089"/>
    </source>
</evidence>
<evidence type="ECO:0000255" key="3"/>
<evidence type="ECO:0000255" key="4">
    <source>
        <dbReference type="PROSITE-ProRule" id="PRU01058"/>
    </source>
</evidence>
<evidence type="ECO:0000256" key="5">
    <source>
        <dbReference type="SAM" id="MobiDB-lite"/>
    </source>
</evidence>
<gene>
    <name evidence="2" type="primary">lsg1</name>
    <name type="ORF">zgc:76988</name>
</gene>
<accession>Q6NY89</accession>
<dbReference type="EC" id="3.6.5.-" evidence="2"/>
<dbReference type="EMBL" id="BC066695">
    <property type="protein sequence ID" value="AAH66695.1"/>
    <property type="molecule type" value="mRNA"/>
</dbReference>
<dbReference type="RefSeq" id="NP_997807.1">
    <property type="nucleotide sequence ID" value="NM_212642.1"/>
</dbReference>
<dbReference type="SMR" id="Q6NY89"/>
<dbReference type="FunCoup" id="Q6NY89">
    <property type="interactions" value="2752"/>
</dbReference>
<dbReference type="STRING" id="7955.ENSDARP00000134827"/>
<dbReference type="PaxDb" id="7955-ENSDARP00000012550"/>
<dbReference type="GeneID" id="323464"/>
<dbReference type="KEGG" id="dre:323464"/>
<dbReference type="AGR" id="ZFIN:ZDB-GENE-030131-2184"/>
<dbReference type="CTD" id="55341"/>
<dbReference type="ZFIN" id="ZDB-GENE-030131-2184">
    <property type="gene designation" value="lsg1"/>
</dbReference>
<dbReference type="eggNOG" id="KOG1424">
    <property type="taxonomic scope" value="Eukaryota"/>
</dbReference>
<dbReference type="InParanoid" id="Q6NY89"/>
<dbReference type="OrthoDB" id="61815at2759"/>
<dbReference type="PhylomeDB" id="Q6NY89"/>
<dbReference type="PRO" id="PR:Q6NY89"/>
<dbReference type="Proteomes" id="UP000000437">
    <property type="component" value="Chromosome 11"/>
</dbReference>
<dbReference type="GO" id="GO:0015030">
    <property type="term" value="C:Cajal body"/>
    <property type="evidence" value="ECO:0000250"/>
    <property type="project" value="UniProtKB"/>
</dbReference>
<dbReference type="GO" id="GO:0005829">
    <property type="term" value="C:cytosol"/>
    <property type="evidence" value="ECO:0000318"/>
    <property type="project" value="GO_Central"/>
</dbReference>
<dbReference type="GO" id="GO:0005783">
    <property type="term" value="C:endoplasmic reticulum"/>
    <property type="evidence" value="ECO:0000250"/>
    <property type="project" value="UniProtKB"/>
</dbReference>
<dbReference type="GO" id="GO:0005525">
    <property type="term" value="F:GTP binding"/>
    <property type="evidence" value="ECO:0000250"/>
    <property type="project" value="UniProtKB"/>
</dbReference>
<dbReference type="GO" id="GO:0003924">
    <property type="term" value="F:GTPase activity"/>
    <property type="evidence" value="ECO:0000318"/>
    <property type="project" value="GO_Central"/>
</dbReference>
<dbReference type="GO" id="GO:0051168">
    <property type="term" value="P:nuclear export"/>
    <property type="evidence" value="ECO:0000250"/>
    <property type="project" value="UniProtKB"/>
</dbReference>
<dbReference type="GO" id="GO:0015031">
    <property type="term" value="P:protein transport"/>
    <property type="evidence" value="ECO:0007669"/>
    <property type="project" value="UniProtKB-KW"/>
</dbReference>
<dbReference type="GO" id="GO:0000054">
    <property type="term" value="P:ribosomal subunit export from nucleus"/>
    <property type="evidence" value="ECO:0000318"/>
    <property type="project" value="GO_Central"/>
</dbReference>
<dbReference type="CDD" id="cd01857">
    <property type="entry name" value="HSR1_MMR1"/>
    <property type="match status" value="1"/>
</dbReference>
<dbReference type="FunFam" id="1.10.1580.10:FF:000008">
    <property type="entry name" value="Large subunit GTPase 1"/>
    <property type="match status" value="1"/>
</dbReference>
<dbReference type="Gene3D" id="1.10.1580.10">
    <property type="match status" value="1"/>
</dbReference>
<dbReference type="Gene3D" id="3.40.50.300">
    <property type="entry name" value="P-loop containing nucleotide triphosphate hydrolases"/>
    <property type="match status" value="1"/>
</dbReference>
<dbReference type="InterPro" id="IPR030378">
    <property type="entry name" value="G_CP_dom"/>
</dbReference>
<dbReference type="InterPro" id="IPR043358">
    <property type="entry name" value="GNL1-like"/>
</dbReference>
<dbReference type="InterPro" id="IPR006073">
    <property type="entry name" value="GTP-bd"/>
</dbReference>
<dbReference type="InterPro" id="IPR023179">
    <property type="entry name" value="GTP-bd_ortho_bundle_sf"/>
</dbReference>
<dbReference type="InterPro" id="IPR027417">
    <property type="entry name" value="P-loop_NTPase"/>
</dbReference>
<dbReference type="PANTHER" id="PTHR45709:SF2">
    <property type="entry name" value="LARGE SUBUNIT GTPASE 1 HOMOLOG"/>
    <property type="match status" value="1"/>
</dbReference>
<dbReference type="PANTHER" id="PTHR45709">
    <property type="entry name" value="LARGE SUBUNIT GTPASE 1 HOMOLOG-RELATED"/>
    <property type="match status" value="1"/>
</dbReference>
<dbReference type="Pfam" id="PF01926">
    <property type="entry name" value="MMR_HSR1"/>
    <property type="match status" value="1"/>
</dbReference>
<dbReference type="PRINTS" id="PR00326">
    <property type="entry name" value="GTP1OBG"/>
</dbReference>
<dbReference type="SUPFAM" id="SSF52540">
    <property type="entry name" value="P-loop containing nucleoside triphosphate hydrolases"/>
    <property type="match status" value="1"/>
</dbReference>
<dbReference type="PROSITE" id="PS51721">
    <property type="entry name" value="G_CP"/>
    <property type="match status" value="1"/>
</dbReference>
<name>LSG1_DANRE</name>
<feature type="chain" id="PRO_0000324558" description="Large subunit GTPase 1 homolog">
    <location>
        <begin position="1"/>
        <end position="640"/>
    </location>
</feature>
<feature type="domain" description="CP-type G" evidence="4">
    <location>
        <begin position="165"/>
        <end position="426"/>
    </location>
</feature>
<feature type="region of interest" description="Disordered" evidence="5">
    <location>
        <begin position="251"/>
        <end position="341"/>
    </location>
</feature>
<feature type="region of interest" description="Disordered" evidence="5">
    <location>
        <begin position="602"/>
        <end position="640"/>
    </location>
</feature>
<feature type="compositionally biased region" description="Acidic residues" evidence="5">
    <location>
        <begin position="253"/>
        <end position="270"/>
    </location>
</feature>
<feature type="compositionally biased region" description="Acidic residues" evidence="5">
    <location>
        <begin position="290"/>
        <end position="304"/>
    </location>
</feature>
<feature type="compositionally biased region" description="Acidic residues" evidence="5">
    <location>
        <begin position="320"/>
        <end position="331"/>
    </location>
</feature>
<feature type="compositionally biased region" description="Polar residues" evidence="5">
    <location>
        <begin position="332"/>
        <end position="341"/>
    </location>
</feature>
<feature type="compositionally biased region" description="Basic residues" evidence="5">
    <location>
        <begin position="618"/>
        <end position="640"/>
    </location>
</feature>
<feature type="binding site" evidence="3">
    <location>
        <begin position="213"/>
        <end position="216"/>
    </location>
    <ligand>
        <name>GTP</name>
        <dbReference type="ChEBI" id="CHEBI:37565"/>
    </ligand>
</feature>
<feature type="binding site" evidence="3">
    <location>
        <begin position="375"/>
        <end position="382"/>
    </location>
    <ligand>
        <name>GTP</name>
        <dbReference type="ChEBI" id="CHEBI:37565"/>
    </ligand>
</feature>
<feature type="binding site" evidence="3">
    <location>
        <begin position="419"/>
        <end position="422"/>
    </location>
    <ligand>
        <name>GTP</name>
        <dbReference type="ChEBI" id="CHEBI:37565"/>
    </ligand>
</feature>
<reference key="1">
    <citation type="submission" date="2004-03" db="EMBL/GenBank/DDBJ databases">
        <authorList>
            <consortium name="NIH - Zebrafish Gene Collection (ZGC) project"/>
        </authorList>
    </citation>
    <scope>NUCLEOTIDE SEQUENCE [LARGE SCALE MRNA]</scope>
    <source>
        <tissue>Kidney</tissue>
    </source>
</reference>